<reference key="1">
    <citation type="journal article" date="2005" name="Nature">
        <title>The genome of the social amoeba Dictyostelium discoideum.</title>
        <authorList>
            <person name="Eichinger L."/>
            <person name="Pachebat J.A."/>
            <person name="Gloeckner G."/>
            <person name="Rajandream M.A."/>
            <person name="Sucgang R."/>
            <person name="Berriman M."/>
            <person name="Song J."/>
            <person name="Olsen R."/>
            <person name="Szafranski K."/>
            <person name="Xu Q."/>
            <person name="Tunggal B."/>
            <person name="Kummerfeld S."/>
            <person name="Madera M."/>
            <person name="Konfortov B.A."/>
            <person name="Rivero F."/>
            <person name="Bankier A.T."/>
            <person name="Lehmann R."/>
            <person name="Hamlin N."/>
            <person name="Davies R."/>
            <person name="Gaudet P."/>
            <person name="Fey P."/>
            <person name="Pilcher K."/>
            <person name="Chen G."/>
            <person name="Saunders D."/>
            <person name="Sodergren E.J."/>
            <person name="Davis P."/>
            <person name="Kerhornou A."/>
            <person name="Nie X."/>
            <person name="Hall N."/>
            <person name="Anjard C."/>
            <person name="Hemphill L."/>
            <person name="Bason N."/>
            <person name="Farbrother P."/>
            <person name="Desany B."/>
            <person name="Just E."/>
            <person name="Morio T."/>
            <person name="Rost R."/>
            <person name="Churcher C.M."/>
            <person name="Cooper J."/>
            <person name="Haydock S."/>
            <person name="van Driessche N."/>
            <person name="Cronin A."/>
            <person name="Goodhead I."/>
            <person name="Muzny D.M."/>
            <person name="Mourier T."/>
            <person name="Pain A."/>
            <person name="Lu M."/>
            <person name="Harper D."/>
            <person name="Lindsay R."/>
            <person name="Hauser H."/>
            <person name="James K.D."/>
            <person name="Quiles M."/>
            <person name="Madan Babu M."/>
            <person name="Saito T."/>
            <person name="Buchrieser C."/>
            <person name="Wardroper A."/>
            <person name="Felder M."/>
            <person name="Thangavelu M."/>
            <person name="Johnson D."/>
            <person name="Knights A."/>
            <person name="Loulseged H."/>
            <person name="Mungall K.L."/>
            <person name="Oliver K."/>
            <person name="Price C."/>
            <person name="Quail M.A."/>
            <person name="Urushihara H."/>
            <person name="Hernandez J."/>
            <person name="Rabbinowitsch E."/>
            <person name="Steffen D."/>
            <person name="Sanders M."/>
            <person name="Ma J."/>
            <person name="Kohara Y."/>
            <person name="Sharp S."/>
            <person name="Simmonds M.N."/>
            <person name="Spiegler S."/>
            <person name="Tivey A."/>
            <person name="Sugano S."/>
            <person name="White B."/>
            <person name="Walker D."/>
            <person name="Woodward J.R."/>
            <person name="Winckler T."/>
            <person name="Tanaka Y."/>
            <person name="Shaulsky G."/>
            <person name="Schleicher M."/>
            <person name="Weinstock G.M."/>
            <person name="Rosenthal A."/>
            <person name="Cox E.C."/>
            <person name="Chisholm R.L."/>
            <person name="Gibbs R.A."/>
            <person name="Loomis W.F."/>
            <person name="Platzer M."/>
            <person name="Kay R.R."/>
            <person name="Williams J.G."/>
            <person name="Dear P.H."/>
            <person name="Noegel A.A."/>
            <person name="Barrell B.G."/>
            <person name="Kuspa A."/>
        </authorList>
    </citation>
    <scope>NUCLEOTIDE SEQUENCE [LARGE SCALE GENOMIC DNA]</scope>
    <source>
        <strain>AX4</strain>
    </source>
</reference>
<protein>
    <recommendedName>
        <fullName>Probable protoheme IX farnesyltransferase, mitochondrial</fullName>
        <ecNumber>2.5.1.-</ecNumber>
    </recommendedName>
    <alternativeName>
        <fullName>Heme O synthase</fullName>
    </alternativeName>
</protein>
<organism>
    <name type="scientific">Dictyostelium discoideum</name>
    <name type="common">Social amoeba</name>
    <dbReference type="NCBI Taxonomy" id="44689"/>
    <lineage>
        <taxon>Eukaryota</taxon>
        <taxon>Amoebozoa</taxon>
        <taxon>Evosea</taxon>
        <taxon>Eumycetozoa</taxon>
        <taxon>Dictyostelia</taxon>
        <taxon>Dictyosteliales</taxon>
        <taxon>Dictyosteliaceae</taxon>
        <taxon>Dictyostelium</taxon>
    </lineage>
</organism>
<keyword id="KW-0350">Heme biosynthesis</keyword>
<keyword id="KW-0472">Membrane</keyword>
<keyword id="KW-0496">Mitochondrion</keyword>
<keyword id="KW-1185">Reference proteome</keyword>
<keyword id="KW-0808">Transferase</keyword>
<keyword id="KW-0809">Transit peptide</keyword>
<keyword id="KW-0812">Transmembrane</keyword>
<keyword id="KW-1133">Transmembrane helix</keyword>
<gene>
    <name type="primary">cox10</name>
    <name type="ORF">DDB_G0288169</name>
</gene>
<dbReference type="EC" id="2.5.1.-"/>
<dbReference type="EMBL" id="AAFI02000109">
    <property type="protein sequence ID" value="EAL63372.1"/>
    <property type="molecule type" value="Genomic_DNA"/>
</dbReference>
<dbReference type="RefSeq" id="XP_636880.1">
    <property type="nucleotide sequence ID" value="XM_631788.1"/>
</dbReference>
<dbReference type="SMR" id="Q54JB3"/>
<dbReference type="FunCoup" id="Q54JB3">
    <property type="interactions" value="351"/>
</dbReference>
<dbReference type="STRING" id="44689.Q54JB3"/>
<dbReference type="GlyGen" id="Q54JB3">
    <property type="glycosylation" value="1 site"/>
</dbReference>
<dbReference type="PaxDb" id="44689-DDB0231473"/>
<dbReference type="EnsemblProtists" id="EAL63372">
    <property type="protein sequence ID" value="EAL63372"/>
    <property type="gene ID" value="DDB_G0288169"/>
</dbReference>
<dbReference type="GeneID" id="8626492"/>
<dbReference type="KEGG" id="ddi:DDB_G0288169"/>
<dbReference type="dictyBase" id="DDB_G0288169">
    <property type="gene designation" value="cox10"/>
</dbReference>
<dbReference type="VEuPathDB" id="AmoebaDB:DDB_G0288169"/>
<dbReference type="eggNOG" id="KOG1380">
    <property type="taxonomic scope" value="Eukaryota"/>
</dbReference>
<dbReference type="HOGENOM" id="CLU_610348_0_0_1"/>
<dbReference type="InParanoid" id="Q54JB3"/>
<dbReference type="OMA" id="PITVYVT"/>
<dbReference type="PhylomeDB" id="Q54JB3"/>
<dbReference type="Reactome" id="R-DDI-189451">
    <property type="pathway name" value="Heme biosynthesis"/>
</dbReference>
<dbReference type="PRO" id="PR:Q54JB3"/>
<dbReference type="Proteomes" id="UP000002195">
    <property type="component" value="Chromosome 5"/>
</dbReference>
<dbReference type="GO" id="GO:0031966">
    <property type="term" value="C:mitochondrial membrane"/>
    <property type="evidence" value="ECO:0007669"/>
    <property type="project" value="UniProtKB-SubCell"/>
</dbReference>
<dbReference type="GO" id="GO:0005739">
    <property type="term" value="C:mitochondrion"/>
    <property type="evidence" value="ECO:0000250"/>
    <property type="project" value="dictyBase"/>
</dbReference>
<dbReference type="GO" id="GO:0008495">
    <property type="term" value="F:protoheme IX farnesyltransferase activity"/>
    <property type="evidence" value="ECO:0000250"/>
    <property type="project" value="dictyBase"/>
</dbReference>
<dbReference type="GO" id="GO:0006784">
    <property type="term" value="P:heme A biosynthetic process"/>
    <property type="evidence" value="ECO:0000250"/>
    <property type="project" value="dictyBase"/>
</dbReference>
<dbReference type="CDD" id="cd13957">
    <property type="entry name" value="PT_UbiA_Cox10"/>
    <property type="match status" value="1"/>
</dbReference>
<dbReference type="FunFam" id="1.10.357.140:FF:000031">
    <property type="entry name" value="Probable protoheme IX farnesyltransferase, mitochondrial"/>
    <property type="match status" value="1"/>
</dbReference>
<dbReference type="Gene3D" id="1.10.357.140">
    <property type="entry name" value="UbiA prenyltransferase"/>
    <property type="match status" value="1"/>
</dbReference>
<dbReference type="InterPro" id="IPR006369">
    <property type="entry name" value="Protohaem_IX_farnesylTrfase"/>
</dbReference>
<dbReference type="InterPro" id="IPR016315">
    <property type="entry name" value="Protohaem_IX_farnesylTrfase_mt"/>
</dbReference>
<dbReference type="InterPro" id="IPR000537">
    <property type="entry name" value="UbiA_prenyltransferase"/>
</dbReference>
<dbReference type="InterPro" id="IPR044878">
    <property type="entry name" value="UbiA_sf"/>
</dbReference>
<dbReference type="PANTHER" id="PTHR43448">
    <property type="entry name" value="PROTOHEME IX FARNESYLTRANSFERASE, MITOCHONDRIAL"/>
    <property type="match status" value="1"/>
</dbReference>
<dbReference type="PANTHER" id="PTHR43448:SF2">
    <property type="entry name" value="PROTOHEME IX FARNESYLTRANSFERASE, MITOCHONDRIAL"/>
    <property type="match status" value="1"/>
</dbReference>
<dbReference type="Pfam" id="PF01040">
    <property type="entry name" value="UbiA"/>
    <property type="match status" value="1"/>
</dbReference>
<dbReference type="PIRSF" id="PIRSF001773">
    <property type="entry name" value="COX10"/>
    <property type="match status" value="1"/>
</dbReference>
<proteinExistence type="inferred from homology"/>
<sequence>MMLSKIINNISKSGLRNTTNSKNGGLLYFQNYYMKSSTTITRLNSGNNNYSNNNNNNNNIILNDKFLNKQQNDKKIIYNNIFEEKNQFLKRIYSTSTTTTSTTTTTNINENNIKNENNNENNNENSNNNNEQSIKSNQTKSKGFLRGPYMTLIKLPITVYVTLTAIAGYVAACPIGAFDWVVLSQVSIGTFLASCSANIHNQEIEVQHDRKMPRTKDRPLVIGTINRGKAWVGSIALLTLGFGTMAVTPSLFVPGTLAACNVILYCWYTDLKRVTPLNTWIGAFVGAIPPLIGSVAATGEFEAIGMLLATFMYIWQIPHFLALSQVLREQYRGAGYKMLSVTHEKKTVDRVSLAHALFGIPLPFIFDYFFNFNVHPITLTCMALSSASLALPFITKISPKRLYIISLISLPITLFLSCLLRQPFAYYTDDDDEDKDKDNQNQIENQDKK</sequence>
<name>COX10_DICDI</name>
<evidence type="ECO:0000250" key="1"/>
<evidence type="ECO:0000255" key="2"/>
<evidence type="ECO:0000256" key="3">
    <source>
        <dbReference type="SAM" id="MobiDB-lite"/>
    </source>
</evidence>
<evidence type="ECO:0000305" key="4"/>
<accession>Q54JB3</accession>
<comment type="function">
    <text evidence="1">Converts protoheme IX and farnesyl diphosphate to heme O.</text>
</comment>
<comment type="subcellular location">
    <subcellularLocation>
        <location evidence="1">Mitochondrion membrane</location>
        <topology evidence="1">Multi-pass membrane protein</topology>
    </subcellularLocation>
</comment>
<comment type="similarity">
    <text evidence="4">Belongs to the UbiA prenyltransferase family.</text>
</comment>
<feature type="transit peptide" description="Mitochondrion" evidence="2">
    <location>
        <begin position="1"/>
        <end status="unknown"/>
    </location>
</feature>
<feature type="chain" id="PRO_0000327206" description="Probable protoheme IX farnesyltransferase, mitochondrial">
    <location>
        <begin status="unknown"/>
        <end position="449"/>
    </location>
</feature>
<feature type="transmembrane region" description="Helical" evidence="2">
    <location>
        <begin position="163"/>
        <end position="183"/>
    </location>
</feature>
<feature type="transmembrane region" description="Helical" evidence="2">
    <location>
        <begin position="245"/>
        <end position="267"/>
    </location>
</feature>
<feature type="transmembrane region" description="Helical" evidence="2">
    <location>
        <begin position="279"/>
        <end position="299"/>
    </location>
</feature>
<feature type="transmembrane region" description="Helical" evidence="2">
    <location>
        <begin position="303"/>
        <end position="323"/>
    </location>
</feature>
<feature type="transmembrane region" description="Helical" evidence="2">
    <location>
        <begin position="352"/>
        <end position="372"/>
    </location>
</feature>
<feature type="transmembrane region" description="Helical" evidence="2">
    <location>
        <begin position="374"/>
        <end position="394"/>
    </location>
</feature>
<feature type="transmembrane region" description="Helical" evidence="2">
    <location>
        <begin position="402"/>
        <end position="422"/>
    </location>
</feature>
<feature type="region of interest" description="Disordered" evidence="3">
    <location>
        <begin position="99"/>
        <end position="140"/>
    </location>
</feature>
<feature type="compositionally biased region" description="Low complexity" evidence="3">
    <location>
        <begin position="99"/>
        <end position="138"/>
    </location>
</feature>